<proteinExistence type="inferred from homology"/>
<organism>
    <name type="scientific">Mycobacterium tuberculosis (strain CDC 1551 / Oshkosh)</name>
    <dbReference type="NCBI Taxonomy" id="83331"/>
    <lineage>
        <taxon>Bacteria</taxon>
        <taxon>Bacillati</taxon>
        <taxon>Actinomycetota</taxon>
        <taxon>Actinomycetes</taxon>
        <taxon>Mycobacteriales</taxon>
        <taxon>Mycobacteriaceae</taxon>
        <taxon>Mycobacterium</taxon>
        <taxon>Mycobacterium tuberculosis complex</taxon>
    </lineage>
</organism>
<dbReference type="EMBL" id="AE000516">
    <property type="protein sequence ID" value="AAK46641.1"/>
    <property type="molecule type" value="Genomic_DNA"/>
</dbReference>
<dbReference type="PIR" id="G70733">
    <property type="entry name" value="G70733"/>
</dbReference>
<dbReference type="RefSeq" id="WP_003411855.1">
    <property type="nucleotide sequence ID" value="NZ_KK341227.1"/>
</dbReference>
<dbReference type="SMR" id="P9WMJ6"/>
<dbReference type="GeneID" id="45426279"/>
<dbReference type="KEGG" id="mtc:MT2356"/>
<dbReference type="PATRIC" id="fig|83331.31.peg.2536"/>
<dbReference type="HOGENOM" id="CLU_006684_3_0_11"/>
<dbReference type="Proteomes" id="UP000001020">
    <property type="component" value="Chromosome"/>
</dbReference>
<dbReference type="GO" id="GO:0005737">
    <property type="term" value="C:cytoplasm"/>
    <property type="evidence" value="ECO:0007669"/>
    <property type="project" value="UniProtKB-SubCell"/>
</dbReference>
<dbReference type="GO" id="GO:0005524">
    <property type="term" value="F:ATP binding"/>
    <property type="evidence" value="ECO:0007669"/>
    <property type="project" value="UniProtKB-UniRule"/>
</dbReference>
<dbReference type="GO" id="GO:0016887">
    <property type="term" value="F:ATP hydrolysis activity"/>
    <property type="evidence" value="ECO:0007669"/>
    <property type="project" value="InterPro"/>
</dbReference>
<dbReference type="GO" id="GO:0140662">
    <property type="term" value="F:ATP-dependent protein folding chaperone"/>
    <property type="evidence" value="ECO:0007669"/>
    <property type="project" value="InterPro"/>
</dbReference>
<dbReference type="GO" id="GO:0051082">
    <property type="term" value="F:unfolded protein binding"/>
    <property type="evidence" value="ECO:0007669"/>
    <property type="project" value="UniProtKB-UniRule"/>
</dbReference>
<dbReference type="CDD" id="cd16927">
    <property type="entry name" value="HATPase_Hsp90-like"/>
    <property type="match status" value="1"/>
</dbReference>
<dbReference type="FunFam" id="1.20.120.790:FF:000006">
    <property type="entry name" value="Chaperone protein HtpG"/>
    <property type="match status" value="1"/>
</dbReference>
<dbReference type="FunFam" id="3.40.50.11260:FF:000005">
    <property type="entry name" value="Heat shock protein 90"/>
    <property type="match status" value="1"/>
</dbReference>
<dbReference type="FunFam" id="3.30.230.80:FF:000002">
    <property type="entry name" value="Molecular chaperone HtpG"/>
    <property type="match status" value="1"/>
</dbReference>
<dbReference type="FunFam" id="3.30.565.10:FF:000009">
    <property type="entry name" value="Molecular chaperone HtpG"/>
    <property type="match status" value="1"/>
</dbReference>
<dbReference type="Gene3D" id="3.30.230.80">
    <property type="match status" value="1"/>
</dbReference>
<dbReference type="Gene3D" id="3.40.50.11260">
    <property type="match status" value="1"/>
</dbReference>
<dbReference type="Gene3D" id="1.20.120.790">
    <property type="entry name" value="Heat shock protein 90, C-terminal domain"/>
    <property type="match status" value="1"/>
</dbReference>
<dbReference type="Gene3D" id="3.30.565.10">
    <property type="entry name" value="Histidine kinase-like ATPase, C-terminal domain"/>
    <property type="match status" value="1"/>
</dbReference>
<dbReference type="HAMAP" id="MF_00505">
    <property type="entry name" value="HSP90"/>
    <property type="match status" value="1"/>
</dbReference>
<dbReference type="InterPro" id="IPR036890">
    <property type="entry name" value="HATPase_C_sf"/>
</dbReference>
<dbReference type="InterPro" id="IPR019805">
    <property type="entry name" value="Heat_shock_protein_90_CS"/>
</dbReference>
<dbReference type="InterPro" id="IPR037196">
    <property type="entry name" value="HSP90_C"/>
</dbReference>
<dbReference type="InterPro" id="IPR001404">
    <property type="entry name" value="Hsp90_fam"/>
</dbReference>
<dbReference type="InterPro" id="IPR020575">
    <property type="entry name" value="Hsp90_N"/>
</dbReference>
<dbReference type="InterPro" id="IPR020568">
    <property type="entry name" value="Ribosomal_Su5_D2-typ_SF"/>
</dbReference>
<dbReference type="NCBIfam" id="NF003555">
    <property type="entry name" value="PRK05218.1"/>
    <property type="match status" value="1"/>
</dbReference>
<dbReference type="PANTHER" id="PTHR11528">
    <property type="entry name" value="HEAT SHOCK PROTEIN 90 FAMILY MEMBER"/>
    <property type="match status" value="1"/>
</dbReference>
<dbReference type="Pfam" id="PF13589">
    <property type="entry name" value="HATPase_c_3"/>
    <property type="match status" value="1"/>
</dbReference>
<dbReference type="Pfam" id="PF00183">
    <property type="entry name" value="HSP90"/>
    <property type="match status" value="1"/>
</dbReference>
<dbReference type="PIRSF" id="PIRSF002583">
    <property type="entry name" value="Hsp90"/>
    <property type="match status" value="1"/>
</dbReference>
<dbReference type="PRINTS" id="PR00775">
    <property type="entry name" value="HEATSHOCK90"/>
</dbReference>
<dbReference type="SMART" id="SM00387">
    <property type="entry name" value="HATPase_c"/>
    <property type="match status" value="1"/>
</dbReference>
<dbReference type="SUPFAM" id="SSF55874">
    <property type="entry name" value="ATPase domain of HSP90 chaperone/DNA topoisomerase II/histidine kinase"/>
    <property type="match status" value="1"/>
</dbReference>
<dbReference type="SUPFAM" id="SSF110942">
    <property type="entry name" value="HSP90 C-terminal domain"/>
    <property type="match status" value="1"/>
</dbReference>
<dbReference type="SUPFAM" id="SSF54211">
    <property type="entry name" value="Ribosomal protein S5 domain 2-like"/>
    <property type="match status" value="1"/>
</dbReference>
<dbReference type="PROSITE" id="PS00298">
    <property type="entry name" value="HSP90"/>
    <property type="match status" value="1"/>
</dbReference>
<protein>
    <recommendedName>
        <fullName evidence="1">Chaperone protein HtpG</fullName>
    </recommendedName>
    <alternativeName>
        <fullName evidence="1">Heat shock protein HtpG</fullName>
    </alternativeName>
    <alternativeName>
        <fullName evidence="1">High temperature protein G</fullName>
    </alternativeName>
</protein>
<sequence>MNAHVEQLEFQAEARQLLDLMVHSVYSNKDAFLRELISNASDALDKLRIEALRNKDLEVDTSDLHIEIDADKAARTLTVRDNGIGMAREEVVDLIGTLAKSGTAELRAQLREAKNAAASEELIGQFGIGFYSSFMVADKVQLLTRKAGESAATRWESSGEGTYTIESVEDAPQGTSVTLHLKPEDAEDDLHDYTSEWKIRNLVKKYSDFIAWPIRMDVERRTPASQEEGGEGGEETVTIETETLNSMKALWARPKEEVSEQEYKEFYKHVAHAWDDPLEIIAMKAEGTFEYQALLFIPSHAPFDLFDRDAHVGIQLYVKRVFIMGDCDQLMPEYLRFVKGVVDAQDMSLNVSREILQQDRQIKAIRRRLTKKVLSTIKDVQSSRPEDYRTFWTQFGRVLKEGLLSDIDNRETLLGISSFVSTYSEEEPTTLAEYVERMKDGQQQIFYATGETRQQLLKSPHLEAFKAKGYEVLLLTDPVDEVWVGMVPEFDGKPLQSVAKGEVDLSSEEDTSEAEREERQKEFADLLTWLQETLSDHVKEVRLSTRLTESPACLITDAFGMTPALARIYRASGQEVPVGKRILELNPSHPLVTGLRQAHQDRADDAEKSLAETAELLYGTALLAEGGALEDPARFAELLAERLARTL</sequence>
<feature type="chain" id="PRO_0000427292" description="Chaperone protein HtpG">
    <location>
        <begin position="1"/>
        <end position="647"/>
    </location>
</feature>
<feature type="region of interest" description="A; substrate-binding" evidence="1">
    <location>
        <begin position="1"/>
        <end position="353"/>
    </location>
</feature>
<feature type="region of interest" description="B" evidence="1">
    <location>
        <begin position="354"/>
        <end position="567"/>
    </location>
</feature>
<feature type="region of interest" description="C" evidence="1">
    <location>
        <begin position="568"/>
        <end position="647"/>
    </location>
</feature>
<gene>
    <name evidence="1" type="primary">htpG</name>
    <name type="ordered locus">MT2356</name>
</gene>
<keyword id="KW-0067">ATP-binding</keyword>
<keyword id="KW-0143">Chaperone</keyword>
<keyword id="KW-0963">Cytoplasm</keyword>
<keyword id="KW-0547">Nucleotide-binding</keyword>
<keyword id="KW-1185">Reference proteome</keyword>
<keyword id="KW-0346">Stress response</keyword>
<evidence type="ECO:0000255" key="1">
    <source>
        <dbReference type="HAMAP-Rule" id="MF_00505"/>
    </source>
</evidence>
<name>HTPG_MYCTO</name>
<reference key="1">
    <citation type="journal article" date="2002" name="J. Bacteriol.">
        <title>Whole-genome comparison of Mycobacterium tuberculosis clinical and laboratory strains.</title>
        <authorList>
            <person name="Fleischmann R.D."/>
            <person name="Alland D."/>
            <person name="Eisen J.A."/>
            <person name="Carpenter L."/>
            <person name="White O."/>
            <person name="Peterson J.D."/>
            <person name="DeBoy R.T."/>
            <person name="Dodson R.J."/>
            <person name="Gwinn M.L."/>
            <person name="Haft D.H."/>
            <person name="Hickey E.K."/>
            <person name="Kolonay J.F."/>
            <person name="Nelson W.C."/>
            <person name="Umayam L.A."/>
            <person name="Ermolaeva M.D."/>
            <person name="Salzberg S.L."/>
            <person name="Delcher A."/>
            <person name="Utterback T.R."/>
            <person name="Weidman J.F."/>
            <person name="Khouri H.M."/>
            <person name="Gill J."/>
            <person name="Mikula A."/>
            <person name="Bishai W."/>
            <person name="Jacobs W.R. Jr."/>
            <person name="Venter J.C."/>
            <person name="Fraser C.M."/>
        </authorList>
    </citation>
    <scope>NUCLEOTIDE SEQUENCE [LARGE SCALE GENOMIC DNA]</scope>
    <source>
        <strain>CDC 1551 / Oshkosh</strain>
    </source>
</reference>
<accession>P9WMJ6</accession>
<accession>L0TC38</accession>
<accession>P64411</accession>
<accession>Q50667</accession>
<comment type="function">
    <text evidence="1">Molecular chaperone. Has ATPase activity.</text>
</comment>
<comment type="subunit">
    <text evidence="1">Homodimer.</text>
</comment>
<comment type="subcellular location">
    <subcellularLocation>
        <location evidence="1">Cytoplasm</location>
    </subcellularLocation>
</comment>
<comment type="similarity">
    <text evidence="1">Belongs to the heat shock protein 90 family.</text>
</comment>